<name>NU4LM_OMMRO</name>
<accession>Q679B9</accession>
<sequence>MTMVYANIFLAFITSLMGLLMYRSHLMSSLLCLEGMMLSLFVMMTITILNSHFTLASMTPIILLVFAACEAALGLSLLVMVSNTYGTDYVQNLNLLQC</sequence>
<reference key="1">
    <citation type="journal article" date="2004" name="Mol. Phylogenet. Evol.">
        <title>A phylogeny of the extant Phocidae inferred from complete mitochondrial DNA coding regions.</title>
        <authorList>
            <person name="Davis C.S."/>
            <person name="Delisle I."/>
            <person name="Stirling I."/>
            <person name="Siniff D.B."/>
            <person name="Strobeck C."/>
        </authorList>
    </citation>
    <scope>NUCLEOTIDE SEQUENCE [GENOMIC DNA]</scope>
</reference>
<feature type="chain" id="PRO_0000275081" description="NADH-ubiquinone oxidoreductase chain 4L">
    <location>
        <begin position="1"/>
        <end position="98"/>
    </location>
</feature>
<feature type="transmembrane region" description="Helical" evidence="3">
    <location>
        <begin position="1"/>
        <end position="21"/>
    </location>
</feature>
<feature type="transmembrane region" description="Helical" evidence="3">
    <location>
        <begin position="29"/>
        <end position="49"/>
    </location>
</feature>
<feature type="transmembrane region" description="Helical" evidence="3">
    <location>
        <begin position="61"/>
        <end position="81"/>
    </location>
</feature>
<geneLocation type="mitochondrion"/>
<dbReference type="EC" id="7.1.1.2"/>
<dbReference type="EMBL" id="AY377224">
    <property type="protein sequence ID" value="AAQ93763.1"/>
    <property type="molecule type" value="Genomic_DNA"/>
</dbReference>
<dbReference type="EMBL" id="AY377225">
    <property type="protein sequence ID" value="AAQ93764.1"/>
    <property type="molecule type" value="Genomic_DNA"/>
</dbReference>
<dbReference type="SMR" id="Q679B9"/>
<dbReference type="GO" id="GO:0005743">
    <property type="term" value="C:mitochondrial inner membrane"/>
    <property type="evidence" value="ECO:0000250"/>
    <property type="project" value="UniProtKB"/>
</dbReference>
<dbReference type="GO" id="GO:0045271">
    <property type="term" value="C:respiratory chain complex I"/>
    <property type="evidence" value="ECO:0000250"/>
    <property type="project" value="UniProtKB"/>
</dbReference>
<dbReference type="GO" id="GO:0008137">
    <property type="term" value="F:NADH dehydrogenase (ubiquinone) activity"/>
    <property type="evidence" value="ECO:0000250"/>
    <property type="project" value="UniProtKB"/>
</dbReference>
<dbReference type="GO" id="GO:0042773">
    <property type="term" value="P:ATP synthesis coupled electron transport"/>
    <property type="evidence" value="ECO:0007669"/>
    <property type="project" value="InterPro"/>
</dbReference>
<dbReference type="FunFam" id="1.10.287.3510:FF:000002">
    <property type="entry name" value="NADH-ubiquinone oxidoreductase chain 4L"/>
    <property type="match status" value="1"/>
</dbReference>
<dbReference type="Gene3D" id="1.10.287.3510">
    <property type="match status" value="1"/>
</dbReference>
<dbReference type="InterPro" id="IPR001133">
    <property type="entry name" value="NADH_UbQ_OxRdtase_chain4L/K"/>
</dbReference>
<dbReference type="InterPro" id="IPR039428">
    <property type="entry name" value="NUOK/Mnh_C1-like"/>
</dbReference>
<dbReference type="PANTHER" id="PTHR11434:SF0">
    <property type="entry name" value="NADH-UBIQUINONE OXIDOREDUCTASE CHAIN 4L"/>
    <property type="match status" value="1"/>
</dbReference>
<dbReference type="PANTHER" id="PTHR11434">
    <property type="entry name" value="NADH-UBIQUINONE OXIDOREDUCTASE SUBUNIT ND4L"/>
    <property type="match status" value="1"/>
</dbReference>
<dbReference type="Pfam" id="PF00420">
    <property type="entry name" value="Oxidored_q2"/>
    <property type="match status" value="1"/>
</dbReference>
<protein>
    <recommendedName>
        <fullName>NADH-ubiquinone oxidoreductase chain 4L</fullName>
        <ecNumber>7.1.1.2</ecNumber>
    </recommendedName>
    <alternativeName>
        <fullName>NADH dehydrogenase subunit 4L</fullName>
    </alternativeName>
</protein>
<proteinExistence type="inferred from homology"/>
<gene>
    <name type="primary">MT-ND4L</name>
    <name type="synonym">MTND4L</name>
    <name type="synonym">NADH4L</name>
    <name type="synonym">ND4L</name>
</gene>
<comment type="function">
    <text evidence="1">Core subunit of the mitochondrial membrane respiratory chain NADH dehydrogenase (Complex I) which catalyzes electron transfer from NADH through the respiratory chain, using ubiquinone as an electron acceptor. Part of the enzyme membrane arm which is embedded in the lipid bilayer and involved in proton translocation.</text>
</comment>
<comment type="catalytic activity">
    <reaction evidence="1">
        <text>a ubiquinone + NADH + 5 H(+)(in) = a ubiquinol + NAD(+) + 4 H(+)(out)</text>
        <dbReference type="Rhea" id="RHEA:29091"/>
        <dbReference type="Rhea" id="RHEA-COMP:9565"/>
        <dbReference type="Rhea" id="RHEA-COMP:9566"/>
        <dbReference type="ChEBI" id="CHEBI:15378"/>
        <dbReference type="ChEBI" id="CHEBI:16389"/>
        <dbReference type="ChEBI" id="CHEBI:17976"/>
        <dbReference type="ChEBI" id="CHEBI:57540"/>
        <dbReference type="ChEBI" id="CHEBI:57945"/>
        <dbReference type="EC" id="7.1.1.2"/>
    </reaction>
    <physiologicalReaction direction="left-to-right" evidence="1">
        <dbReference type="Rhea" id="RHEA:29092"/>
    </physiologicalReaction>
</comment>
<comment type="subunit">
    <text evidence="2">Core subunit of respiratory chain NADH dehydrogenase (Complex I) which is composed of 45 different subunits.</text>
</comment>
<comment type="subcellular location">
    <subcellularLocation>
        <location evidence="2">Mitochondrion inner membrane</location>
        <topology evidence="3">Multi-pass membrane protein</topology>
    </subcellularLocation>
</comment>
<comment type="similarity">
    <text evidence="4">Belongs to the complex I subunit 4L family.</text>
</comment>
<keyword id="KW-0249">Electron transport</keyword>
<keyword id="KW-0472">Membrane</keyword>
<keyword id="KW-0496">Mitochondrion</keyword>
<keyword id="KW-0999">Mitochondrion inner membrane</keyword>
<keyword id="KW-0520">NAD</keyword>
<keyword id="KW-0679">Respiratory chain</keyword>
<keyword id="KW-1278">Translocase</keyword>
<keyword id="KW-0812">Transmembrane</keyword>
<keyword id="KW-1133">Transmembrane helix</keyword>
<keyword id="KW-0813">Transport</keyword>
<keyword id="KW-0830">Ubiquinone</keyword>
<evidence type="ECO:0000250" key="1">
    <source>
        <dbReference type="UniProtKB" id="P03901"/>
    </source>
</evidence>
<evidence type="ECO:0000250" key="2">
    <source>
        <dbReference type="UniProtKB" id="P03902"/>
    </source>
</evidence>
<evidence type="ECO:0000255" key="3"/>
<evidence type="ECO:0000305" key="4"/>
<organism>
    <name type="scientific">Ommatophoca rossii</name>
    <name type="common">Ross seal</name>
    <dbReference type="NCBI Taxonomy" id="207342"/>
    <lineage>
        <taxon>Eukaryota</taxon>
        <taxon>Metazoa</taxon>
        <taxon>Chordata</taxon>
        <taxon>Craniata</taxon>
        <taxon>Vertebrata</taxon>
        <taxon>Euteleostomi</taxon>
        <taxon>Mammalia</taxon>
        <taxon>Eutheria</taxon>
        <taxon>Laurasiatheria</taxon>
        <taxon>Carnivora</taxon>
        <taxon>Caniformia</taxon>
        <taxon>Pinnipedia</taxon>
        <taxon>Phocidae</taxon>
        <taxon>Monachinae</taxon>
        <taxon>Lobodontini</taxon>
        <taxon>Ommatophoca</taxon>
    </lineage>
</organism>